<accession>B6DCK2</accession>
<feature type="signal peptide" evidence="2">
    <location>
        <begin position="1"/>
        <end position="20"/>
    </location>
</feature>
<feature type="propeptide" id="PRO_0000401523" evidence="1">
    <location>
        <begin position="21"/>
        <end position="41"/>
    </location>
</feature>
<feature type="chain" id="PRO_0000401524" description="U1-lycotoxin-Ls1b">
    <location>
        <begin position="42"/>
        <end position="107"/>
    </location>
</feature>
<feature type="disulfide bond" evidence="1">
    <location>
        <begin position="44"/>
        <end position="59"/>
    </location>
</feature>
<feature type="disulfide bond" evidence="1">
    <location>
        <begin position="51"/>
        <end position="68"/>
    </location>
</feature>
<feature type="disulfide bond" evidence="1">
    <location>
        <begin position="58"/>
        <end position="86"/>
    </location>
</feature>
<feature type="disulfide bond" evidence="1">
    <location>
        <begin position="70"/>
        <end position="84"/>
    </location>
</feature>
<comment type="subcellular location">
    <subcellularLocation>
        <location evidence="1">Secreted</location>
    </subcellularLocation>
</comment>
<comment type="tissue specificity">
    <text>Expressed by the venom gland.</text>
</comment>
<comment type="domain">
    <text evidence="1">The presence of a 'disulfide through disulfide knot' structurally defines this protein as a knottin.</text>
</comment>
<comment type="similarity">
    <text evidence="3">Belongs to the neurotoxin 19 (CSTX) family. 04 (U1-Lctx) subfamily.</text>
</comment>
<proteinExistence type="evidence at transcript level"/>
<keyword id="KW-1015">Disulfide bond</keyword>
<keyword id="KW-0960">Knottin</keyword>
<keyword id="KW-0964">Secreted</keyword>
<keyword id="KW-0732">Signal</keyword>
<keyword id="KW-0800">Toxin</keyword>
<name>TX113_LYCSI</name>
<evidence type="ECO:0000250" key="1"/>
<evidence type="ECO:0000255" key="2"/>
<evidence type="ECO:0000305" key="3"/>
<protein>
    <recommendedName>
        <fullName>U1-lycotoxin-Ls1b</fullName>
    </recommendedName>
    <alternativeName>
        <fullName>Toxin-like structure LSTX-A13</fullName>
    </alternativeName>
</protein>
<sequence length="107" mass="11854">MMKVLVVVALLATLISYSSSEGIDDLEADELLSLMANEQTRKECIPKHHECTSNKHGCCRGNFFKYKCQCTTVVTQDGEQTERCFCGTPPHHKAAELVVGFGKKIFG</sequence>
<organism>
    <name type="scientific">Lycosa singoriensis</name>
    <name type="common">Wolf spider</name>
    <name type="synonym">Aranea singoriensis</name>
    <dbReference type="NCBI Taxonomy" id="434756"/>
    <lineage>
        <taxon>Eukaryota</taxon>
        <taxon>Metazoa</taxon>
        <taxon>Ecdysozoa</taxon>
        <taxon>Arthropoda</taxon>
        <taxon>Chelicerata</taxon>
        <taxon>Arachnida</taxon>
        <taxon>Araneae</taxon>
        <taxon>Araneomorphae</taxon>
        <taxon>Entelegynae</taxon>
        <taxon>Lycosoidea</taxon>
        <taxon>Lycosidae</taxon>
        <taxon>Lycosa</taxon>
    </lineage>
</organism>
<reference key="1">
    <citation type="journal article" date="2010" name="Zoology">
        <title>Transcriptome analysis of the venom glands of the Chinese wolf spider Lycosa singoriensis.</title>
        <authorList>
            <person name="Zhang Y."/>
            <person name="Chen J."/>
            <person name="Tang X."/>
            <person name="Wang F."/>
            <person name="Jiang L."/>
            <person name="Xiong X."/>
            <person name="Wang M."/>
            <person name="Rong M."/>
            <person name="Liu Z."/>
            <person name="Liang S."/>
        </authorList>
    </citation>
    <scope>NUCLEOTIDE SEQUENCE [LARGE SCALE MRNA]</scope>
    <source>
        <tissue>Venom gland</tissue>
    </source>
</reference>
<dbReference type="EMBL" id="EU925936">
    <property type="protein sequence ID" value="ACI41268.1"/>
    <property type="molecule type" value="mRNA"/>
</dbReference>
<dbReference type="EMBL" id="FM863940">
    <property type="protein sequence ID" value="CAS03538.1"/>
    <property type="molecule type" value="mRNA"/>
</dbReference>
<dbReference type="SMR" id="B6DCK2"/>
<dbReference type="ArachnoServer" id="AS000884">
    <property type="toxin name" value="U1-lycotoxin-Ls1b"/>
</dbReference>
<dbReference type="GO" id="GO:0005576">
    <property type="term" value="C:extracellular region"/>
    <property type="evidence" value="ECO:0007669"/>
    <property type="project" value="UniProtKB-SubCell"/>
</dbReference>
<dbReference type="GO" id="GO:0090729">
    <property type="term" value="F:toxin activity"/>
    <property type="evidence" value="ECO:0007669"/>
    <property type="project" value="UniProtKB-KW"/>
</dbReference>
<dbReference type="InterPro" id="IPR019553">
    <property type="entry name" value="Spider_toxin_CSTX_knottin"/>
</dbReference>
<dbReference type="InterPro" id="IPR011142">
    <property type="entry name" value="Spider_toxin_CSTX_Knottin_CS"/>
</dbReference>
<dbReference type="Pfam" id="PF10530">
    <property type="entry name" value="Toxin_35"/>
    <property type="match status" value="1"/>
</dbReference>
<dbReference type="PROSITE" id="PS60029">
    <property type="entry name" value="SPIDER_CSTX"/>
    <property type="match status" value="1"/>
</dbReference>